<keyword id="KW-0249">Electron transport</keyword>
<keyword id="KW-0472">Membrane</keyword>
<keyword id="KW-0496">Mitochondrion</keyword>
<keyword id="KW-0999">Mitochondrion inner membrane</keyword>
<keyword id="KW-0520">NAD</keyword>
<keyword id="KW-0679">Respiratory chain</keyword>
<keyword id="KW-1278">Translocase</keyword>
<keyword id="KW-0812">Transmembrane</keyword>
<keyword id="KW-1133">Transmembrane helix</keyword>
<keyword id="KW-0813">Transport</keyword>
<keyword id="KW-0830">Ubiquinone</keyword>
<gene>
    <name type="primary">MT-ND1</name>
    <name type="synonym">MTND1</name>
    <name type="synonym">NADH1</name>
    <name type="synonym">ND1</name>
</gene>
<dbReference type="EC" id="7.1.1.2" evidence="1"/>
<dbReference type="EMBL" id="AJ505831">
    <property type="protein sequence ID" value="CAD44378.1"/>
    <property type="molecule type" value="Genomic_DNA"/>
</dbReference>
<dbReference type="SMR" id="Q70Y29"/>
<dbReference type="GO" id="GO:0005743">
    <property type="term" value="C:mitochondrial inner membrane"/>
    <property type="evidence" value="ECO:0000250"/>
    <property type="project" value="UniProtKB"/>
</dbReference>
<dbReference type="GO" id="GO:0008137">
    <property type="term" value="F:NADH dehydrogenase (ubiquinone) activity"/>
    <property type="evidence" value="ECO:0000250"/>
    <property type="project" value="UniProtKB"/>
</dbReference>
<dbReference type="GO" id="GO:0006120">
    <property type="term" value="P:mitochondrial electron transport, NADH to ubiquinone"/>
    <property type="evidence" value="ECO:0000250"/>
    <property type="project" value="UniProtKB"/>
</dbReference>
<dbReference type="GO" id="GO:0032981">
    <property type="term" value="P:mitochondrial respiratory chain complex I assembly"/>
    <property type="evidence" value="ECO:0000250"/>
    <property type="project" value="UniProtKB"/>
</dbReference>
<dbReference type="HAMAP" id="MF_01350">
    <property type="entry name" value="NDH1_NuoH"/>
    <property type="match status" value="1"/>
</dbReference>
<dbReference type="InterPro" id="IPR001694">
    <property type="entry name" value="NADH_UbQ_OxRdtase_su1/FPO"/>
</dbReference>
<dbReference type="InterPro" id="IPR018086">
    <property type="entry name" value="NADH_UbQ_OxRdtase_su1_CS"/>
</dbReference>
<dbReference type="PANTHER" id="PTHR11432">
    <property type="entry name" value="NADH DEHYDROGENASE SUBUNIT 1"/>
    <property type="match status" value="1"/>
</dbReference>
<dbReference type="PANTHER" id="PTHR11432:SF3">
    <property type="entry name" value="NADH-UBIQUINONE OXIDOREDUCTASE CHAIN 1"/>
    <property type="match status" value="1"/>
</dbReference>
<dbReference type="Pfam" id="PF00146">
    <property type="entry name" value="NADHdh"/>
    <property type="match status" value="1"/>
</dbReference>
<dbReference type="PROSITE" id="PS00667">
    <property type="entry name" value="COMPLEX1_ND1_1"/>
    <property type="match status" value="1"/>
</dbReference>
<dbReference type="PROSITE" id="PS00668">
    <property type="entry name" value="COMPLEX1_ND1_2"/>
    <property type="match status" value="1"/>
</dbReference>
<geneLocation type="mitochondrion"/>
<organism>
    <name type="scientific">Myrmecophaga tridactyla</name>
    <name type="common">Giant anteater</name>
    <dbReference type="NCBI Taxonomy" id="71006"/>
    <lineage>
        <taxon>Eukaryota</taxon>
        <taxon>Metazoa</taxon>
        <taxon>Chordata</taxon>
        <taxon>Craniata</taxon>
        <taxon>Vertebrata</taxon>
        <taxon>Euteleostomi</taxon>
        <taxon>Mammalia</taxon>
        <taxon>Eutheria</taxon>
        <taxon>Xenarthra</taxon>
        <taxon>Pilosa</taxon>
        <taxon>Vermilingua</taxon>
        <taxon>Myrmecophagidae</taxon>
        <taxon>Myrmecophaga</taxon>
    </lineage>
</organism>
<sequence length="318" mass="35432">MFMINIACLIIPILLAVAFLTLVERKTLGYMQVRKGPNIVGPHGLLQPIADAVKLFTKEPLRPLTSSKLLFTVAPTLALTLALTMWLPLPMPHSLINLNLGVLFILAISSLAVYSILWSGWASNSKYALIGALRAVAQTVSYEVTLAIILLSVLLMSGSFTLTNLITTQEHMWLIIPTWPLAMMWFISTLAETNRAPFDLTEGESELVSGFNVEYAAGPFALFFLAEYANIMMMNALTTLLFLGALHTPLVPGIYTANFVLKTLILTIMFLWIRASYPRFRYDQLMHLLWKNFLPLTLAMLMWHVSSPMSLASIPPQT</sequence>
<comment type="function">
    <text evidence="1">Core subunit of the mitochondrial membrane respiratory chain NADH dehydrogenase (Complex I) which catalyzes electron transfer from NADH through the respiratory chain, using ubiquinone as an electron acceptor. Essential for the catalytic activity and assembly of complex I.</text>
</comment>
<comment type="catalytic activity">
    <reaction evidence="1">
        <text>a ubiquinone + NADH + 5 H(+)(in) = a ubiquinol + NAD(+) + 4 H(+)(out)</text>
        <dbReference type="Rhea" id="RHEA:29091"/>
        <dbReference type="Rhea" id="RHEA-COMP:9565"/>
        <dbReference type="Rhea" id="RHEA-COMP:9566"/>
        <dbReference type="ChEBI" id="CHEBI:15378"/>
        <dbReference type="ChEBI" id="CHEBI:16389"/>
        <dbReference type="ChEBI" id="CHEBI:17976"/>
        <dbReference type="ChEBI" id="CHEBI:57540"/>
        <dbReference type="ChEBI" id="CHEBI:57945"/>
        <dbReference type="EC" id="7.1.1.2"/>
    </reaction>
</comment>
<comment type="subunit">
    <text evidence="2">Core subunit of respiratory chain NADH dehydrogenase (Complex I) which is composed of 45 different subunits.</text>
</comment>
<comment type="subcellular location">
    <subcellularLocation>
        <location evidence="2">Mitochondrion inner membrane</location>
        <topology evidence="3">Multi-pass membrane protein</topology>
    </subcellularLocation>
</comment>
<comment type="similarity">
    <text evidence="4">Belongs to the complex I subunit 1 family.</text>
</comment>
<protein>
    <recommendedName>
        <fullName>NADH-ubiquinone oxidoreductase chain 1</fullName>
        <ecNumber evidence="1">7.1.1.2</ecNumber>
    </recommendedName>
    <alternativeName>
        <fullName>NADH dehydrogenase subunit 1</fullName>
    </alternativeName>
</protein>
<evidence type="ECO:0000250" key="1">
    <source>
        <dbReference type="UniProtKB" id="P03886"/>
    </source>
</evidence>
<evidence type="ECO:0000250" key="2">
    <source>
        <dbReference type="UniProtKB" id="P03887"/>
    </source>
</evidence>
<evidence type="ECO:0000255" key="3"/>
<evidence type="ECO:0000305" key="4"/>
<feature type="chain" id="PRO_0000117433" description="NADH-ubiquinone oxidoreductase chain 1">
    <location>
        <begin position="1"/>
        <end position="318"/>
    </location>
</feature>
<feature type="transmembrane region" description="Helical" evidence="3">
    <location>
        <begin position="2"/>
        <end position="22"/>
    </location>
</feature>
<feature type="transmembrane region" description="Helical" evidence="3">
    <location>
        <begin position="69"/>
        <end position="89"/>
    </location>
</feature>
<feature type="transmembrane region" description="Helical" evidence="3">
    <location>
        <begin position="100"/>
        <end position="120"/>
    </location>
</feature>
<feature type="transmembrane region" description="Helical" evidence="3">
    <location>
        <begin position="146"/>
        <end position="166"/>
    </location>
</feature>
<feature type="transmembrane region" description="Helical" evidence="3">
    <location>
        <begin position="171"/>
        <end position="191"/>
    </location>
</feature>
<feature type="transmembrane region" description="Helical" evidence="3">
    <location>
        <begin position="231"/>
        <end position="251"/>
    </location>
</feature>
<feature type="transmembrane region" description="Helical" evidence="3">
    <location>
        <begin position="253"/>
        <end position="273"/>
    </location>
</feature>
<feature type="transmembrane region" description="Helical" evidence="3">
    <location>
        <begin position="285"/>
        <end position="305"/>
    </location>
</feature>
<reference key="1">
    <citation type="journal article" date="2003" name="Mol. Phylogenet. Evol.">
        <title>Molecular systematics of armadillos (Xenarthra, Dasypodidae): contribution of maximum likelihood and Bayesian analyses of mitochondrial and nuclear genes.</title>
        <authorList>
            <person name="Delsuc F."/>
            <person name="Stanhope M.J."/>
            <person name="Douzery E.J."/>
        </authorList>
    </citation>
    <scope>NUCLEOTIDE SEQUENCE [GENOMIC DNA]</scope>
</reference>
<name>NU1M_MYRTR</name>
<accession>Q70Y29</accession>
<proteinExistence type="inferred from homology"/>